<protein>
    <recommendedName>
        <fullName evidence="1">Pyridoxal 5'-phosphate synthase subunit PdxT</fullName>
        <ecNumber evidence="1">4.3.3.6</ecNumber>
    </recommendedName>
    <alternativeName>
        <fullName evidence="1">Pdx2</fullName>
    </alternativeName>
    <alternativeName>
        <fullName evidence="1">Pyridoxal 5'-phosphate synthase glutaminase subunit</fullName>
        <ecNumber evidence="1">3.5.1.2</ecNumber>
    </alternativeName>
</protein>
<evidence type="ECO:0000255" key="1">
    <source>
        <dbReference type="HAMAP-Rule" id="MF_01615"/>
    </source>
</evidence>
<evidence type="ECO:0000305" key="2"/>
<proteinExistence type="inferred from homology"/>
<feature type="chain" id="PRO_1000069459" description="Pyridoxal 5'-phosphate synthase subunit PdxT">
    <location>
        <begin position="1"/>
        <end position="179"/>
    </location>
</feature>
<feature type="active site" description="Nucleophile" evidence="1">
    <location>
        <position position="79"/>
    </location>
</feature>
<feature type="active site" description="Charge relay system" evidence="1">
    <location>
        <position position="163"/>
    </location>
</feature>
<feature type="active site" description="Charge relay system" evidence="1">
    <location>
        <position position="165"/>
    </location>
</feature>
<feature type="binding site" evidence="1">
    <location>
        <begin position="48"/>
        <end position="50"/>
    </location>
    <ligand>
        <name>L-glutamine</name>
        <dbReference type="ChEBI" id="CHEBI:58359"/>
    </ligand>
</feature>
<feature type="binding site" evidence="1">
    <location>
        <position position="101"/>
    </location>
    <ligand>
        <name>L-glutamine</name>
        <dbReference type="ChEBI" id="CHEBI:58359"/>
    </ligand>
</feature>
<feature type="binding site" evidence="1">
    <location>
        <begin position="127"/>
        <end position="128"/>
    </location>
    <ligand>
        <name>L-glutamine</name>
        <dbReference type="ChEBI" id="CHEBI:58359"/>
    </ligand>
</feature>
<gene>
    <name evidence="1" type="primary">pdxT</name>
    <name type="ordered locus">FTA_1630</name>
</gene>
<keyword id="KW-0315">Glutamine amidotransferase</keyword>
<keyword id="KW-0378">Hydrolase</keyword>
<keyword id="KW-0456">Lyase</keyword>
<keyword id="KW-0663">Pyridoxal phosphate</keyword>
<sequence length="179" mass="19961">MTQKVGVLAIQGGYQKHADMFKSLGVEVKLVKFNNDFDSIDRLVIPGGESTTLLNLLNKHQIFDKLYNFCSSKPVFGTCAGSIILSKGEGYLNLLDLEVQRNAYGRQVDSFVADISFNDKNITGVFIRAPKFIVVGNQVDILSKYQNSPVLLRQANILVSSFHPELTQDPTVHEYFLAM</sequence>
<name>PDXT_FRATF</name>
<dbReference type="EC" id="4.3.3.6" evidence="1"/>
<dbReference type="EC" id="3.5.1.2" evidence="1"/>
<dbReference type="EMBL" id="CP000803">
    <property type="protein sequence ID" value="ABU62105.2"/>
    <property type="status" value="ALT_INIT"/>
    <property type="molecule type" value="Genomic_DNA"/>
</dbReference>
<dbReference type="RefSeq" id="WP_003016897.1">
    <property type="nucleotide sequence ID" value="NC_009749.1"/>
</dbReference>
<dbReference type="SMR" id="A7NDQ2"/>
<dbReference type="MEROPS" id="C26.A32"/>
<dbReference type="KEGG" id="fta:FTA_1630"/>
<dbReference type="HOGENOM" id="CLU_069674_2_0_6"/>
<dbReference type="UniPathway" id="UPA00245"/>
<dbReference type="GO" id="GO:0005829">
    <property type="term" value="C:cytosol"/>
    <property type="evidence" value="ECO:0007669"/>
    <property type="project" value="TreeGrafter"/>
</dbReference>
<dbReference type="GO" id="GO:1903600">
    <property type="term" value="C:glutaminase complex"/>
    <property type="evidence" value="ECO:0007669"/>
    <property type="project" value="TreeGrafter"/>
</dbReference>
<dbReference type="GO" id="GO:0004359">
    <property type="term" value="F:glutaminase activity"/>
    <property type="evidence" value="ECO:0007669"/>
    <property type="project" value="UniProtKB-UniRule"/>
</dbReference>
<dbReference type="GO" id="GO:0036381">
    <property type="term" value="F:pyridoxal 5'-phosphate synthase (glutamine hydrolysing) activity"/>
    <property type="evidence" value="ECO:0007669"/>
    <property type="project" value="UniProtKB-UniRule"/>
</dbReference>
<dbReference type="GO" id="GO:0006543">
    <property type="term" value="P:glutamine catabolic process"/>
    <property type="evidence" value="ECO:0007669"/>
    <property type="project" value="UniProtKB-UniRule"/>
</dbReference>
<dbReference type="GO" id="GO:0042823">
    <property type="term" value="P:pyridoxal phosphate biosynthetic process"/>
    <property type="evidence" value="ECO:0007669"/>
    <property type="project" value="UniProtKB-UniRule"/>
</dbReference>
<dbReference type="GO" id="GO:0008614">
    <property type="term" value="P:pyridoxine metabolic process"/>
    <property type="evidence" value="ECO:0007669"/>
    <property type="project" value="TreeGrafter"/>
</dbReference>
<dbReference type="CDD" id="cd01749">
    <property type="entry name" value="GATase1_PB"/>
    <property type="match status" value="1"/>
</dbReference>
<dbReference type="Gene3D" id="3.40.50.880">
    <property type="match status" value="1"/>
</dbReference>
<dbReference type="HAMAP" id="MF_01615">
    <property type="entry name" value="PdxT"/>
    <property type="match status" value="1"/>
</dbReference>
<dbReference type="InterPro" id="IPR029062">
    <property type="entry name" value="Class_I_gatase-like"/>
</dbReference>
<dbReference type="InterPro" id="IPR002161">
    <property type="entry name" value="PdxT/SNO"/>
</dbReference>
<dbReference type="InterPro" id="IPR021196">
    <property type="entry name" value="PdxT/SNO_CS"/>
</dbReference>
<dbReference type="NCBIfam" id="TIGR03800">
    <property type="entry name" value="PLP_synth_Pdx2"/>
    <property type="match status" value="1"/>
</dbReference>
<dbReference type="NCBIfam" id="NF010050">
    <property type="entry name" value="PRK13526.1"/>
    <property type="match status" value="1"/>
</dbReference>
<dbReference type="PANTHER" id="PTHR31559">
    <property type="entry name" value="PYRIDOXAL 5'-PHOSPHATE SYNTHASE SUBUNIT SNO"/>
    <property type="match status" value="1"/>
</dbReference>
<dbReference type="PANTHER" id="PTHR31559:SF0">
    <property type="entry name" value="PYRIDOXAL 5'-PHOSPHATE SYNTHASE SUBUNIT SNO1-RELATED"/>
    <property type="match status" value="1"/>
</dbReference>
<dbReference type="Pfam" id="PF01174">
    <property type="entry name" value="SNO"/>
    <property type="match status" value="1"/>
</dbReference>
<dbReference type="PIRSF" id="PIRSF005639">
    <property type="entry name" value="Glut_amidoT_SNO"/>
    <property type="match status" value="1"/>
</dbReference>
<dbReference type="SUPFAM" id="SSF52317">
    <property type="entry name" value="Class I glutamine amidotransferase-like"/>
    <property type="match status" value="1"/>
</dbReference>
<dbReference type="PROSITE" id="PS01236">
    <property type="entry name" value="PDXT_SNO_1"/>
    <property type="match status" value="1"/>
</dbReference>
<dbReference type="PROSITE" id="PS51130">
    <property type="entry name" value="PDXT_SNO_2"/>
    <property type="match status" value="1"/>
</dbReference>
<accession>A7NDQ2</accession>
<reference key="1">
    <citation type="journal article" date="2009" name="PLoS ONE">
        <title>Complete genome sequence of Francisella tularensis subspecies holarctica FTNF002-00.</title>
        <authorList>
            <person name="Barabote R.D."/>
            <person name="Xie G."/>
            <person name="Brettin T.S."/>
            <person name="Hinrichs S.H."/>
            <person name="Fey P.D."/>
            <person name="Jay J.J."/>
            <person name="Engle J.L."/>
            <person name="Godbole S.D."/>
            <person name="Noronha J.M."/>
            <person name="Scheuermann R.H."/>
            <person name="Zhou L.W."/>
            <person name="Lion C."/>
            <person name="Dempsey M.P."/>
        </authorList>
    </citation>
    <scope>NUCLEOTIDE SEQUENCE [LARGE SCALE GENOMIC DNA]</scope>
    <source>
        <strain>FTNF002-00 / FTA</strain>
    </source>
</reference>
<comment type="function">
    <text evidence="1">Catalyzes the hydrolysis of glutamine to glutamate and ammonia as part of the biosynthesis of pyridoxal 5'-phosphate. The resulting ammonia molecule is channeled to the active site of PdxS.</text>
</comment>
<comment type="catalytic activity">
    <reaction evidence="1">
        <text>aldehydo-D-ribose 5-phosphate + D-glyceraldehyde 3-phosphate + L-glutamine = pyridoxal 5'-phosphate + L-glutamate + phosphate + 3 H2O + H(+)</text>
        <dbReference type="Rhea" id="RHEA:31507"/>
        <dbReference type="ChEBI" id="CHEBI:15377"/>
        <dbReference type="ChEBI" id="CHEBI:15378"/>
        <dbReference type="ChEBI" id="CHEBI:29985"/>
        <dbReference type="ChEBI" id="CHEBI:43474"/>
        <dbReference type="ChEBI" id="CHEBI:58273"/>
        <dbReference type="ChEBI" id="CHEBI:58359"/>
        <dbReference type="ChEBI" id="CHEBI:59776"/>
        <dbReference type="ChEBI" id="CHEBI:597326"/>
        <dbReference type="EC" id="4.3.3.6"/>
    </reaction>
</comment>
<comment type="catalytic activity">
    <reaction evidence="1">
        <text>L-glutamine + H2O = L-glutamate + NH4(+)</text>
        <dbReference type="Rhea" id="RHEA:15889"/>
        <dbReference type="ChEBI" id="CHEBI:15377"/>
        <dbReference type="ChEBI" id="CHEBI:28938"/>
        <dbReference type="ChEBI" id="CHEBI:29985"/>
        <dbReference type="ChEBI" id="CHEBI:58359"/>
        <dbReference type="EC" id="3.5.1.2"/>
    </reaction>
</comment>
<comment type="pathway">
    <text evidence="1">Cofactor biosynthesis; pyridoxal 5'-phosphate biosynthesis.</text>
</comment>
<comment type="subunit">
    <text evidence="1">In the presence of PdxS, forms a dodecamer of heterodimers. Only shows activity in the heterodimer.</text>
</comment>
<comment type="similarity">
    <text evidence="1">Belongs to the glutaminase PdxT/SNO family.</text>
</comment>
<comment type="sequence caution" evidence="2">
    <conflict type="erroneous initiation">
        <sequence resource="EMBL-CDS" id="ABU62105"/>
    </conflict>
</comment>
<organism>
    <name type="scientific">Francisella tularensis subsp. holarctica (strain FTNF002-00 / FTA)</name>
    <dbReference type="NCBI Taxonomy" id="458234"/>
    <lineage>
        <taxon>Bacteria</taxon>
        <taxon>Pseudomonadati</taxon>
        <taxon>Pseudomonadota</taxon>
        <taxon>Gammaproteobacteria</taxon>
        <taxon>Thiotrichales</taxon>
        <taxon>Francisellaceae</taxon>
        <taxon>Francisella</taxon>
    </lineage>
</organism>